<comment type="function">
    <text evidence="1">O-methyltransferase that catalyzes the 2 O-methylation steps in the ubiquinone biosynthetic pathway.</text>
</comment>
<comment type="catalytic activity">
    <reaction evidence="1">
        <text>a 3-demethylubiquinol + S-adenosyl-L-methionine = a ubiquinol + S-adenosyl-L-homocysteine + H(+)</text>
        <dbReference type="Rhea" id="RHEA:44380"/>
        <dbReference type="Rhea" id="RHEA-COMP:9566"/>
        <dbReference type="Rhea" id="RHEA-COMP:10914"/>
        <dbReference type="ChEBI" id="CHEBI:15378"/>
        <dbReference type="ChEBI" id="CHEBI:17976"/>
        <dbReference type="ChEBI" id="CHEBI:57856"/>
        <dbReference type="ChEBI" id="CHEBI:59789"/>
        <dbReference type="ChEBI" id="CHEBI:84422"/>
        <dbReference type="EC" id="2.1.1.64"/>
    </reaction>
</comment>
<comment type="catalytic activity">
    <reaction evidence="1">
        <text>a 3-(all-trans-polyprenyl)benzene-1,2-diol + S-adenosyl-L-methionine = a 2-methoxy-6-(all-trans-polyprenyl)phenol + S-adenosyl-L-homocysteine + H(+)</text>
        <dbReference type="Rhea" id="RHEA:31411"/>
        <dbReference type="Rhea" id="RHEA-COMP:9550"/>
        <dbReference type="Rhea" id="RHEA-COMP:9551"/>
        <dbReference type="ChEBI" id="CHEBI:15378"/>
        <dbReference type="ChEBI" id="CHEBI:57856"/>
        <dbReference type="ChEBI" id="CHEBI:59789"/>
        <dbReference type="ChEBI" id="CHEBI:62729"/>
        <dbReference type="ChEBI" id="CHEBI:62731"/>
        <dbReference type="EC" id="2.1.1.222"/>
    </reaction>
</comment>
<comment type="pathway">
    <text evidence="1">Cofactor biosynthesis; ubiquinone biosynthesis.</text>
</comment>
<comment type="similarity">
    <text evidence="1">Belongs to the methyltransferase superfamily. UbiG/COQ3 family.</text>
</comment>
<evidence type="ECO:0000255" key="1">
    <source>
        <dbReference type="HAMAP-Rule" id="MF_00472"/>
    </source>
</evidence>
<gene>
    <name evidence="1" type="primary">ubiG</name>
    <name type="ordered locus">XCC2269</name>
</gene>
<protein>
    <recommendedName>
        <fullName evidence="1">Ubiquinone biosynthesis O-methyltransferase</fullName>
    </recommendedName>
    <alternativeName>
        <fullName evidence="1">2-polyprenyl-6-hydroxyphenol methylase</fullName>
        <ecNumber evidence="1">2.1.1.222</ecNumber>
    </alternativeName>
    <alternativeName>
        <fullName evidence="1">3-demethylubiquinone 3-O-methyltransferase</fullName>
        <ecNumber evidence="1">2.1.1.64</ecNumber>
    </alternativeName>
</protein>
<accession>Q8P8H2</accession>
<name>UBIG_XANCP</name>
<feature type="chain" id="PRO_0000193410" description="Ubiquinone biosynthesis O-methyltransferase">
    <location>
        <begin position="1"/>
        <end position="239"/>
    </location>
</feature>
<feature type="binding site" evidence="1">
    <location>
        <position position="44"/>
    </location>
    <ligand>
        <name>S-adenosyl-L-methionine</name>
        <dbReference type="ChEBI" id="CHEBI:59789"/>
    </ligand>
</feature>
<feature type="binding site" evidence="1">
    <location>
        <position position="63"/>
    </location>
    <ligand>
        <name>S-adenosyl-L-methionine</name>
        <dbReference type="ChEBI" id="CHEBI:59789"/>
    </ligand>
</feature>
<feature type="binding site" evidence="1">
    <location>
        <position position="84"/>
    </location>
    <ligand>
        <name>S-adenosyl-L-methionine</name>
        <dbReference type="ChEBI" id="CHEBI:59789"/>
    </ligand>
</feature>
<feature type="binding site" evidence="1">
    <location>
        <position position="128"/>
    </location>
    <ligand>
        <name>S-adenosyl-L-methionine</name>
        <dbReference type="ChEBI" id="CHEBI:59789"/>
    </ligand>
</feature>
<reference key="1">
    <citation type="journal article" date="2002" name="Nature">
        <title>Comparison of the genomes of two Xanthomonas pathogens with differing host specificities.</title>
        <authorList>
            <person name="da Silva A.C.R."/>
            <person name="Ferro J.A."/>
            <person name="Reinach F.C."/>
            <person name="Farah C.S."/>
            <person name="Furlan L.R."/>
            <person name="Quaggio R.B."/>
            <person name="Monteiro-Vitorello C.B."/>
            <person name="Van Sluys M.A."/>
            <person name="Almeida N.F. Jr."/>
            <person name="Alves L.M.C."/>
            <person name="do Amaral A.M."/>
            <person name="Bertolini M.C."/>
            <person name="Camargo L.E.A."/>
            <person name="Camarotte G."/>
            <person name="Cannavan F."/>
            <person name="Cardozo J."/>
            <person name="Chambergo F."/>
            <person name="Ciapina L.P."/>
            <person name="Cicarelli R.M.B."/>
            <person name="Coutinho L.L."/>
            <person name="Cursino-Santos J.R."/>
            <person name="El-Dorry H."/>
            <person name="Faria J.B."/>
            <person name="Ferreira A.J.S."/>
            <person name="Ferreira R.C.C."/>
            <person name="Ferro M.I.T."/>
            <person name="Formighieri E.F."/>
            <person name="Franco M.C."/>
            <person name="Greggio C.C."/>
            <person name="Gruber A."/>
            <person name="Katsuyama A.M."/>
            <person name="Kishi L.T."/>
            <person name="Leite R.P."/>
            <person name="Lemos E.G.M."/>
            <person name="Lemos M.V.F."/>
            <person name="Locali E.C."/>
            <person name="Machado M.A."/>
            <person name="Madeira A.M.B.N."/>
            <person name="Martinez-Rossi N.M."/>
            <person name="Martins E.C."/>
            <person name="Meidanis J."/>
            <person name="Menck C.F.M."/>
            <person name="Miyaki C.Y."/>
            <person name="Moon D.H."/>
            <person name="Moreira L.M."/>
            <person name="Novo M.T.M."/>
            <person name="Okura V.K."/>
            <person name="Oliveira M.C."/>
            <person name="Oliveira V.R."/>
            <person name="Pereira H.A."/>
            <person name="Rossi A."/>
            <person name="Sena J.A.D."/>
            <person name="Silva C."/>
            <person name="de Souza R.F."/>
            <person name="Spinola L.A.F."/>
            <person name="Takita M.A."/>
            <person name="Tamura R.E."/>
            <person name="Teixeira E.C."/>
            <person name="Tezza R.I.D."/>
            <person name="Trindade dos Santos M."/>
            <person name="Truffi D."/>
            <person name="Tsai S.M."/>
            <person name="White F.F."/>
            <person name="Setubal J.C."/>
            <person name="Kitajima J.P."/>
        </authorList>
    </citation>
    <scope>NUCLEOTIDE SEQUENCE [LARGE SCALE GENOMIC DNA]</scope>
    <source>
        <strain>ATCC 33913 / DSM 3586 / NCPPB 528 / LMG 568 / P 25</strain>
    </source>
</reference>
<proteinExistence type="inferred from homology"/>
<sequence length="239" mass="26039">MNPNPQSTSSNFHQTELDKFAALANRWWDADGPQKPLHALNPVRLDYVAARVALPGARVLDVGCGGGLLSEAMARLGAQVTAIDLAPELVKVARLHSLESSVQVDYRVQSVEDLAAEQPGSFDAVTCMEMLEHVPDPLAIIRACASLLKPGGTLFLSTLNRTPAAFALAVVGAEYIARLLPKGTHHYKDFIKPSELAAWLRTAELQLQDVSGMLYEPWRNRARLSSRTEVNYLACAVKP</sequence>
<organism>
    <name type="scientific">Xanthomonas campestris pv. campestris (strain ATCC 33913 / DSM 3586 / NCPPB 528 / LMG 568 / P 25)</name>
    <dbReference type="NCBI Taxonomy" id="190485"/>
    <lineage>
        <taxon>Bacteria</taxon>
        <taxon>Pseudomonadati</taxon>
        <taxon>Pseudomonadota</taxon>
        <taxon>Gammaproteobacteria</taxon>
        <taxon>Lysobacterales</taxon>
        <taxon>Lysobacteraceae</taxon>
        <taxon>Xanthomonas</taxon>
    </lineage>
</organism>
<dbReference type="EC" id="2.1.1.222" evidence="1"/>
<dbReference type="EC" id="2.1.1.64" evidence="1"/>
<dbReference type="EMBL" id="AE008922">
    <property type="protein sequence ID" value="AAM41548.1"/>
    <property type="molecule type" value="Genomic_DNA"/>
</dbReference>
<dbReference type="RefSeq" id="NP_637624.1">
    <property type="nucleotide sequence ID" value="NC_003902.1"/>
</dbReference>
<dbReference type="RefSeq" id="WP_011037413.1">
    <property type="nucleotide sequence ID" value="NC_003902.1"/>
</dbReference>
<dbReference type="SMR" id="Q8P8H2"/>
<dbReference type="STRING" id="190485.XCC2269"/>
<dbReference type="DNASU" id="998846"/>
<dbReference type="EnsemblBacteria" id="AAM41548">
    <property type="protein sequence ID" value="AAM41548"/>
    <property type="gene ID" value="XCC2269"/>
</dbReference>
<dbReference type="KEGG" id="xcc:XCC2269"/>
<dbReference type="PATRIC" id="fig|190485.4.peg.2419"/>
<dbReference type="eggNOG" id="COG2227">
    <property type="taxonomic scope" value="Bacteria"/>
</dbReference>
<dbReference type="HOGENOM" id="CLU_042432_5_0_6"/>
<dbReference type="OrthoDB" id="9801538at2"/>
<dbReference type="UniPathway" id="UPA00232"/>
<dbReference type="Proteomes" id="UP000001010">
    <property type="component" value="Chromosome"/>
</dbReference>
<dbReference type="GO" id="GO:0102208">
    <property type="term" value="F:2-polyprenyl-6-hydroxyphenol methylase activity"/>
    <property type="evidence" value="ECO:0007669"/>
    <property type="project" value="UniProtKB-EC"/>
</dbReference>
<dbReference type="GO" id="GO:0061542">
    <property type="term" value="F:3-demethylubiquinol 3-O-methyltransferase activity"/>
    <property type="evidence" value="ECO:0007669"/>
    <property type="project" value="UniProtKB-UniRule"/>
</dbReference>
<dbReference type="GO" id="GO:0008168">
    <property type="term" value="F:methyltransferase activity"/>
    <property type="evidence" value="ECO:0000318"/>
    <property type="project" value="GO_Central"/>
</dbReference>
<dbReference type="GO" id="GO:0010420">
    <property type="term" value="F:polyprenyldihydroxybenzoate methyltransferase activity"/>
    <property type="evidence" value="ECO:0007669"/>
    <property type="project" value="InterPro"/>
</dbReference>
<dbReference type="GO" id="GO:0032259">
    <property type="term" value="P:methylation"/>
    <property type="evidence" value="ECO:0007669"/>
    <property type="project" value="UniProtKB-KW"/>
</dbReference>
<dbReference type="CDD" id="cd02440">
    <property type="entry name" value="AdoMet_MTases"/>
    <property type="match status" value="1"/>
</dbReference>
<dbReference type="FunFam" id="3.40.50.150:FF:000028">
    <property type="entry name" value="Ubiquinone biosynthesis O-methyltransferase"/>
    <property type="match status" value="1"/>
</dbReference>
<dbReference type="Gene3D" id="3.40.50.150">
    <property type="entry name" value="Vaccinia Virus protein VP39"/>
    <property type="match status" value="1"/>
</dbReference>
<dbReference type="HAMAP" id="MF_00472">
    <property type="entry name" value="UbiG"/>
    <property type="match status" value="1"/>
</dbReference>
<dbReference type="InterPro" id="IPR029063">
    <property type="entry name" value="SAM-dependent_MTases_sf"/>
</dbReference>
<dbReference type="InterPro" id="IPR010233">
    <property type="entry name" value="UbiG_MeTrfase"/>
</dbReference>
<dbReference type="NCBIfam" id="TIGR01983">
    <property type="entry name" value="UbiG"/>
    <property type="match status" value="1"/>
</dbReference>
<dbReference type="PANTHER" id="PTHR43464">
    <property type="entry name" value="METHYLTRANSFERASE"/>
    <property type="match status" value="1"/>
</dbReference>
<dbReference type="PANTHER" id="PTHR43464:SF19">
    <property type="entry name" value="UBIQUINONE BIOSYNTHESIS O-METHYLTRANSFERASE, MITOCHONDRIAL"/>
    <property type="match status" value="1"/>
</dbReference>
<dbReference type="Pfam" id="PF13489">
    <property type="entry name" value="Methyltransf_23"/>
    <property type="match status" value="1"/>
</dbReference>
<dbReference type="SUPFAM" id="SSF53335">
    <property type="entry name" value="S-adenosyl-L-methionine-dependent methyltransferases"/>
    <property type="match status" value="1"/>
</dbReference>
<keyword id="KW-0489">Methyltransferase</keyword>
<keyword id="KW-1185">Reference proteome</keyword>
<keyword id="KW-0949">S-adenosyl-L-methionine</keyword>
<keyword id="KW-0808">Transferase</keyword>
<keyword id="KW-0831">Ubiquinone biosynthesis</keyword>